<feature type="initiator methionine" description="Removed" evidence="2">
    <location>
        <position position="1"/>
    </location>
</feature>
<feature type="chain" id="PRO_0000342666" description="NADH dehydrogenase [ubiquinone] 1 alpha subcomplex assembly factor 4">
    <location>
        <begin position="2"/>
        <end position="174"/>
    </location>
</feature>
<feature type="region of interest" description="Disordered" evidence="3">
    <location>
        <begin position="15"/>
        <end position="38"/>
    </location>
</feature>
<feature type="compositionally biased region" description="Basic and acidic residues" evidence="3">
    <location>
        <begin position="15"/>
        <end position="24"/>
    </location>
</feature>
<feature type="modified residue" description="Phosphoserine" evidence="2">
    <location>
        <position position="35"/>
    </location>
</feature>
<feature type="lipid moiety-binding region" description="N-myristoyl glycine" evidence="2">
    <location>
        <position position="2"/>
    </location>
</feature>
<sequence>MGARMTRAFRNFNVEKRAEQEISKRKPSMAPKHPSTRSLLQEHLSQYPEIEEEVSRKDNKLLSLLRDVYVNSKDPVPSLPVKAIEPQQQPKEFRLPIGDQFDKNIKDIPKGKITVVEALTLLNNHKLSPETWTAEKIAQEYHLELEDVNSLLKYFVTFEVKIVPPEDRKAIQSK</sequence>
<organism>
    <name type="scientific">Rattus norvegicus</name>
    <name type="common">Rat</name>
    <dbReference type="NCBI Taxonomy" id="10116"/>
    <lineage>
        <taxon>Eukaryota</taxon>
        <taxon>Metazoa</taxon>
        <taxon>Chordata</taxon>
        <taxon>Craniata</taxon>
        <taxon>Vertebrata</taxon>
        <taxon>Euteleostomi</taxon>
        <taxon>Mammalia</taxon>
        <taxon>Eutheria</taxon>
        <taxon>Euarchontoglires</taxon>
        <taxon>Glires</taxon>
        <taxon>Rodentia</taxon>
        <taxon>Myomorpha</taxon>
        <taxon>Muroidea</taxon>
        <taxon>Muridae</taxon>
        <taxon>Murinae</taxon>
        <taxon>Rattus</taxon>
    </lineage>
</organism>
<keyword id="KW-0112">Calmodulin-binding</keyword>
<keyword id="KW-0449">Lipoprotein</keyword>
<keyword id="KW-0472">Membrane</keyword>
<keyword id="KW-0496">Mitochondrion</keyword>
<keyword id="KW-0519">Myristate</keyword>
<keyword id="KW-0597">Phosphoprotein</keyword>
<keyword id="KW-1185">Reference proteome</keyword>
<name>NDUF4_RAT</name>
<gene>
    <name type="primary">Ndufaf4</name>
    <name type="synonym">Hrpap20</name>
</gene>
<evidence type="ECO:0000250" key="1"/>
<evidence type="ECO:0000250" key="2">
    <source>
        <dbReference type="UniProtKB" id="Q9P032"/>
    </source>
</evidence>
<evidence type="ECO:0000256" key="3">
    <source>
        <dbReference type="SAM" id="MobiDB-lite"/>
    </source>
</evidence>
<evidence type="ECO:0000269" key="4">
    <source>
    </source>
</evidence>
<evidence type="ECO:0000305" key="5"/>
<comment type="function">
    <text evidence="1 4">May be involved in cell proliferation and survival of hormone-dependent tumor cells. Involved in the assembly of mitochondrial NADH:ubiquinone oxidoreductase complex (complex I) (By similarity).</text>
</comment>
<comment type="subunit">
    <text evidence="1">Binds calmodulin. Interacts with NDUFAF3.</text>
</comment>
<comment type="subcellular location">
    <subcellularLocation>
        <location evidence="1">Mitochondrion</location>
    </subcellularLocation>
    <subcellularLocation>
        <location evidence="2">Membrane</location>
        <topology evidence="2">Lipid-anchor</topology>
    </subcellularLocation>
</comment>
<comment type="induction">
    <text evidence="4">Expression is low in quiescent cells and is induced in exponentially proliferating cultures. Expression is also induced when prolactin is added to stationary cells. Induced by dietary differentiating agents such as butyrate, vitamin D3, and retinoic acid.</text>
</comment>
<comment type="PTM">
    <text evidence="4">Phosphorylated on serine. Prolactin stimulate serine phosphorylation.</text>
</comment>
<comment type="similarity">
    <text evidence="5">Belongs to the NDUFAF4 family.</text>
</comment>
<proteinExistence type="evidence at protein level"/>
<protein>
    <recommendedName>
        <fullName>NADH dehydrogenase [ubiquinone] 1 alpha subcomplex assembly factor 4</fullName>
    </recommendedName>
    <alternativeName>
        <fullName>Hormone-regulated proliferation-associated protein of 20 kDa homolog</fullName>
    </alternativeName>
    <alternativeName>
        <fullName>Protein HRPAP20</fullName>
    </alternativeName>
</protein>
<reference key="1">
    <citation type="journal article" date="2004" name="Cancer Res.">
        <title>Identification of HRPAP20: a novel phosphoprotein that enhances growth and survival in hormone-responsive tumor cells.</title>
        <authorList>
            <person name="Karp C.M."/>
            <person name="Pan H."/>
            <person name="Zhang M."/>
            <person name="Buckley D.J."/>
            <person name="Schuler L.A."/>
            <person name="Buckley A.R."/>
        </authorList>
    </citation>
    <scope>NUCLEOTIDE SEQUENCE [MRNA]</scope>
    <scope>FUNCTION</scope>
    <scope>INDUCTION</scope>
    <scope>PHOSPHORYLATION</scope>
</reference>
<accession>Q9NQR8</accession>
<dbReference type="EMBL" id="AF283900">
    <property type="protein sequence ID" value="AAF90196.1"/>
    <property type="molecule type" value="mRNA"/>
</dbReference>
<dbReference type="RefSeq" id="NP_942078.1">
    <property type="nucleotide sequence ID" value="NM_198783.2"/>
</dbReference>
<dbReference type="SMR" id="Q9NQR8"/>
<dbReference type="FunCoup" id="Q9NQR8">
    <property type="interactions" value="780"/>
</dbReference>
<dbReference type="IntAct" id="Q9NQR8">
    <property type="interactions" value="1"/>
</dbReference>
<dbReference type="STRING" id="10116.ENSRNOP00000010072"/>
<dbReference type="GlyGen" id="Q9NQR8">
    <property type="glycosylation" value="1 site, 1 O-linked glycan (1 site)"/>
</dbReference>
<dbReference type="iPTMnet" id="Q9NQR8"/>
<dbReference type="PhosphoSitePlus" id="Q9NQR8"/>
<dbReference type="jPOST" id="Q9NQR8"/>
<dbReference type="PaxDb" id="10116-ENSRNOP00000010072"/>
<dbReference type="Ensembl" id="ENSRNOT00000101158.1">
    <property type="protein sequence ID" value="ENSRNOP00000076552.1"/>
    <property type="gene ID" value="ENSRNOG00000007506.6"/>
</dbReference>
<dbReference type="GeneID" id="362495"/>
<dbReference type="KEGG" id="rno:362495"/>
<dbReference type="UCSC" id="RGD:735162">
    <property type="organism name" value="rat"/>
</dbReference>
<dbReference type="AGR" id="RGD:735162"/>
<dbReference type="CTD" id="29078"/>
<dbReference type="RGD" id="735162">
    <property type="gene designation" value="Ndufaf4"/>
</dbReference>
<dbReference type="eggNOG" id="KOG4481">
    <property type="taxonomic scope" value="Eukaryota"/>
</dbReference>
<dbReference type="GeneTree" id="ENSGT00390000001627"/>
<dbReference type="HOGENOM" id="CLU_054693_2_0_1"/>
<dbReference type="InParanoid" id="Q9NQR8"/>
<dbReference type="OMA" id="IPDQKYK"/>
<dbReference type="OrthoDB" id="2434756at2759"/>
<dbReference type="PhylomeDB" id="Q9NQR8"/>
<dbReference type="TreeFam" id="TF323532"/>
<dbReference type="Reactome" id="R-RNO-6799198">
    <property type="pathway name" value="Complex I biogenesis"/>
</dbReference>
<dbReference type="PRO" id="PR:Q9NQR8"/>
<dbReference type="Proteomes" id="UP000002494">
    <property type="component" value="Chromosome 5"/>
</dbReference>
<dbReference type="Bgee" id="ENSRNOG00000007506">
    <property type="expression patterns" value="Expressed in heart and 20 other cell types or tissues"/>
</dbReference>
<dbReference type="GO" id="GO:0031966">
    <property type="term" value="C:mitochondrial membrane"/>
    <property type="evidence" value="ECO:0000266"/>
    <property type="project" value="RGD"/>
</dbReference>
<dbReference type="GO" id="GO:0005739">
    <property type="term" value="C:mitochondrion"/>
    <property type="evidence" value="ECO:0000318"/>
    <property type="project" value="GO_Central"/>
</dbReference>
<dbReference type="GO" id="GO:0005516">
    <property type="term" value="F:calmodulin binding"/>
    <property type="evidence" value="ECO:0007669"/>
    <property type="project" value="UniProtKB-KW"/>
</dbReference>
<dbReference type="GO" id="GO:0051607">
    <property type="term" value="P:defense response to virus"/>
    <property type="evidence" value="ECO:0000266"/>
    <property type="project" value="RGD"/>
</dbReference>
<dbReference type="GO" id="GO:0032981">
    <property type="term" value="P:mitochondrial respiratory chain complex I assembly"/>
    <property type="evidence" value="ECO:0000266"/>
    <property type="project" value="RGD"/>
</dbReference>
<dbReference type="GO" id="GO:0010257">
    <property type="term" value="P:NADH dehydrogenase complex assembly"/>
    <property type="evidence" value="ECO:0000266"/>
    <property type="project" value="RGD"/>
</dbReference>
<dbReference type="GO" id="GO:0043066">
    <property type="term" value="P:negative regulation of apoptotic process"/>
    <property type="evidence" value="ECO:0000315"/>
    <property type="project" value="RGD"/>
</dbReference>
<dbReference type="GO" id="GO:0008284">
    <property type="term" value="P:positive regulation of cell population proliferation"/>
    <property type="evidence" value="ECO:0000315"/>
    <property type="project" value="RGD"/>
</dbReference>
<dbReference type="InterPro" id="IPR009622">
    <property type="entry name" value="NDUFAF4"/>
</dbReference>
<dbReference type="PANTHER" id="PTHR13338:SF4">
    <property type="entry name" value="NADH DEHYDROGENASE [UBIQUINONE] 1 ALPHA SUBCOMPLEX ASSEMBLY FACTOR 4"/>
    <property type="match status" value="1"/>
</dbReference>
<dbReference type="PANTHER" id="PTHR13338">
    <property type="entry name" value="UPF0240 PROTEIN"/>
    <property type="match status" value="1"/>
</dbReference>
<dbReference type="Pfam" id="PF06784">
    <property type="entry name" value="UPF0240"/>
    <property type="match status" value="1"/>
</dbReference>